<feature type="signal peptide" evidence="4">
    <location>
        <begin position="1"/>
        <end position="18"/>
    </location>
</feature>
<feature type="chain" id="PRO_0000042209" description="Leukocyte surface antigen CD47">
    <location>
        <begin position="19"/>
        <end position="303"/>
    </location>
</feature>
<feature type="topological domain" description="Extracellular" evidence="4">
    <location>
        <begin position="19"/>
        <end position="140"/>
    </location>
</feature>
<feature type="transmembrane region" description="Helical" evidence="4">
    <location>
        <begin position="141"/>
        <end position="161"/>
    </location>
</feature>
<feature type="topological domain" description="Cytoplasmic" evidence="4">
    <location>
        <begin position="162"/>
        <end position="173"/>
    </location>
</feature>
<feature type="transmembrane region" description="Helical" evidence="4">
    <location>
        <begin position="174"/>
        <end position="194"/>
    </location>
</feature>
<feature type="topological domain" description="Extracellular" evidence="4">
    <location>
        <begin position="195"/>
        <end position="206"/>
    </location>
</feature>
<feature type="transmembrane region" description="Helical" evidence="4">
    <location>
        <begin position="207"/>
        <end position="227"/>
    </location>
</feature>
<feature type="topological domain" description="Cytoplasmic" evidence="4">
    <location>
        <begin position="228"/>
        <end position="238"/>
    </location>
</feature>
<feature type="transmembrane region" description="Helical" evidence="4">
    <location>
        <begin position="239"/>
        <end position="259"/>
    </location>
</feature>
<feature type="topological domain" description="Extracellular" evidence="4">
    <location>
        <begin position="260"/>
        <end position="266"/>
    </location>
</feature>
<feature type="transmembrane region" description="Helical" evidence="4">
    <location>
        <begin position="267"/>
        <end position="287"/>
    </location>
</feature>
<feature type="topological domain" description="Cytoplasmic" evidence="4">
    <location>
        <begin position="288"/>
        <end position="303"/>
    </location>
</feature>
<feature type="domain" description="Ig-like V-type">
    <location>
        <begin position="19"/>
        <end position="125"/>
    </location>
</feature>
<feature type="modified residue" description="Pyrrolidone carboxylic acid" evidence="2 9">
    <location>
        <position position="19"/>
    </location>
</feature>
<feature type="modified residue" description="Phosphoserine" evidence="10">
    <location>
        <position position="87"/>
    </location>
</feature>
<feature type="modified residue" description="Phosphoserine" evidence="10">
    <location>
        <position position="89"/>
    </location>
</feature>
<feature type="glycosylation site" description="N-linked (GlcNAc...) asparagine" evidence="4">
    <location>
        <position position="34"/>
    </location>
</feature>
<feature type="glycosylation site" description="N-linked (GlcNAc...) asparagine" evidence="4">
    <location>
        <position position="61"/>
    </location>
</feature>
<feature type="glycosylation site" description="N-linked (GlcNAc...) asparagine" evidence="4">
    <location>
        <position position="73"/>
    </location>
</feature>
<feature type="glycosylation site" description="N-linked (GlcNAc...) asparagine" evidence="11">
    <location>
        <position position="80"/>
    </location>
</feature>
<feature type="glycosylation site" description="N-linked (GlcNAc...) asparagine" evidence="11">
    <location>
        <position position="109"/>
    </location>
</feature>
<feature type="glycosylation site" description="N-linked (GlcNAc...) asparagine" evidence="4">
    <location>
        <position position="204"/>
    </location>
</feature>
<feature type="disulfide bond" evidence="5">
    <location>
        <begin position="33"/>
        <end position="261"/>
    </location>
</feature>
<feature type="disulfide bond" evidence="5">
    <location>
        <begin position="41"/>
        <end position="112"/>
    </location>
</feature>
<feature type="splice variant" id="VSP_015794" description="In isoform 2." evidence="8">
    <original>LLLG</original>
    <variation>R</variation>
    <location>
        <begin position="8"/>
        <end position="11"/>
    </location>
</feature>
<feature type="splice variant" id="VSP_015795" description="In isoform 2." evidence="8">
    <original>NN</original>
    <variation>KAVEEPLNAFKESKGMMNDE</variation>
    <location>
        <begin position="302"/>
        <end position="303"/>
    </location>
</feature>
<feature type="modified residue" description="Phosphoserine" evidence="10">
    <location sequence="P97829-2">
        <position position="311"/>
    </location>
</feature>
<reference key="1">
    <citation type="journal article" date="1997" name="Jpn. J. Cancer Res.">
        <title>Overexpression of integrin-associated protein (CD47) in rat kidney treated with a renal carcinogen, ferric nitrilotriacetate.</title>
        <authorList>
            <person name="Nishiyama Y."/>
            <person name="Tanaka T."/>
            <person name="Naitoh H."/>
            <person name="Mori C."/>
            <person name="Fukumoto M."/>
            <person name="Hiai H."/>
            <person name="Toyokuni S."/>
        </authorList>
    </citation>
    <scope>NUCLEOTIDE SEQUENCE [MRNA] (ISOFORM 1)</scope>
    <scope>INDUCTION</scope>
    <source>
        <strain>Wistar</strain>
        <tissue>Kidney</tissue>
    </source>
</reference>
<reference key="2">
    <citation type="journal article" date="1998" name="J. Neurosci.">
        <title>Expression of integrin-associated protein gene associated with memory formation in rats.</title>
        <authorList>
            <person name="Huang A.-M."/>
            <person name="Wang H.L."/>
            <person name="Tang Y.P."/>
            <person name="Lee E.H.Y."/>
        </authorList>
    </citation>
    <scope>NUCLEOTIDE SEQUENCE [MRNA] (ISOFORM 2)</scope>
    <scope>FUNCTION</scope>
    <scope>TISSUE SPECIFICITY</scope>
    <scope>INDUCTION</scope>
    <source>
        <strain>Sprague-Dawley</strain>
        <tissue>Brain</tissue>
    </source>
</reference>
<reference key="3">
    <citation type="journal article" date="2004" name="Genome Res.">
        <title>The status, quality, and expansion of the NIH full-length cDNA project: the Mammalian Gene Collection (MGC).</title>
        <authorList>
            <consortium name="The MGC Project Team"/>
        </authorList>
    </citation>
    <scope>NUCLEOTIDE SEQUENCE [LARGE SCALE MRNA] (ISOFORM 1)</scope>
    <source>
        <strain>Brown Norway</strain>
        <tissue>Heart</tissue>
    </source>
</reference>
<reference key="4">
    <citation type="submission" date="2007-09" db="UniProtKB">
        <authorList>
            <person name="Lubec G."/>
            <person name="Kang S.U."/>
            <person name="Lubec S."/>
        </authorList>
    </citation>
    <scope>PROTEIN SEQUENCE OF 43-57; 63-93; 123-128 AND 158-164</scope>
    <scope>IDENTIFICATION BY MASS SPECTROMETRY</scope>
    <source>
        <strain>Sprague-Dawley</strain>
        <tissue>Brain</tissue>
    </source>
</reference>
<reference key="5">
    <citation type="journal article" date="2012" name="Nat. Commun.">
        <title>Quantitative maps of protein phosphorylation sites across 14 different rat organs and tissues.</title>
        <authorList>
            <person name="Lundby A."/>
            <person name="Secher A."/>
            <person name="Lage K."/>
            <person name="Nordsborg N.B."/>
            <person name="Dmytriyev A."/>
            <person name="Lundby C."/>
            <person name="Olsen J.V."/>
        </authorList>
    </citation>
    <scope>PHOSPHORYLATION [LARGE SCALE ANALYSIS] AT SER-87 AND SER-89</scope>
    <scope>PHOSPHORYLATION [LARGE SCALE ANALYSIS] AT SER-311 (ISOFORM 2)</scope>
    <scope>IDENTIFICATION BY MASS SPECTROMETRY [LARGE SCALE ANALYSIS]</scope>
</reference>
<reference key="6">
    <citation type="journal article" date="2013" name="J. Proteome Res.">
        <title>Site-specific glycan-peptide analysis for determination of N-glycoproteome heterogeneity.</title>
        <authorList>
            <person name="Parker B.L."/>
            <person name="Thaysen-Andersen M."/>
            <person name="Solis N."/>
            <person name="Scott N.E."/>
            <person name="Larsen M.R."/>
            <person name="Graham M.E."/>
            <person name="Packer N.H."/>
            <person name="Cordwell S.J."/>
        </authorList>
    </citation>
    <scope>GLYCOSYLATION [LARGE SCALE ANALYSIS] AT ASN-80 AND ASN-109</scope>
    <scope>IDENTIFICATION BY MASS SPECTROMETRY [LARGE SCALE ANALYSIS]</scope>
    <source>
        <tissue>Brain</tissue>
    </source>
</reference>
<keyword id="KW-0025">Alternative splicing</keyword>
<keyword id="KW-0130">Cell adhesion</keyword>
<keyword id="KW-1003">Cell membrane</keyword>
<keyword id="KW-0903">Direct protein sequencing</keyword>
<keyword id="KW-1015">Disulfide bond</keyword>
<keyword id="KW-0325">Glycoprotein</keyword>
<keyword id="KW-0393">Immunoglobulin domain</keyword>
<keyword id="KW-0401">Integrin</keyword>
<keyword id="KW-0472">Membrane</keyword>
<keyword id="KW-0597">Phosphoprotein</keyword>
<keyword id="KW-0873">Pyrrolidone carboxylic acid</keyword>
<keyword id="KW-1185">Reference proteome</keyword>
<keyword id="KW-0732">Signal</keyword>
<keyword id="KW-0812">Transmembrane</keyword>
<keyword id="KW-1133">Transmembrane helix</keyword>
<accession>P97829</accession>
<accession>O35294</accession>
<organism>
    <name type="scientific">Rattus norvegicus</name>
    <name type="common">Rat</name>
    <dbReference type="NCBI Taxonomy" id="10116"/>
    <lineage>
        <taxon>Eukaryota</taxon>
        <taxon>Metazoa</taxon>
        <taxon>Chordata</taxon>
        <taxon>Craniata</taxon>
        <taxon>Vertebrata</taxon>
        <taxon>Euteleostomi</taxon>
        <taxon>Mammalia</taxon>
        <taxon>Eutheria</taxon>
        <taxon>Euarchontoglires</taxon>
        <taxon>Glires</taxon>
        <taxon>Rodentia</taxon>
        <taxon>Myomorpha</taxon>
        <taxon>Muroidea</taxon>
        <taxon>Muridae</taxon>
        <taxon>Murinae</taxon>
        <taxon>Rattus</taxon>
    </lineage>
</organism>
<proteinExistence type="evidence at protein level"/>
<comment type="function">
    <text evidence="2 3 7">Adhesive protein that mediates cell-to-cell interactions. Acts as a receptor for thrombospondin THBS1 and as modulator of integrin signaling through the activation of heterotrimeric G proteins. Involved in signal transduction, cardiovascular homeostasis, inflammation, apoptosis, angiogenesis, cellular self-renewal, and immunoregulation. Plays a role in modulating pulmonary endothelin EDN1 signaling (By similarity). Modulates nitrous oxide (NO) signaling, in response to THBS1, hence playing a role as a pressor agent, supporting blood pressure (By similarity). Plays an important role in memory formation and synaptic plasticity in the hippocampus (PubMed:9592107). Receptor for SIRPA, binding to which prevents maturation of immature dendritic cells and inhibits cytokine production by mature dendritic cells. Interaction with SIRPG mediates cell-cell adhesion, enhances superantigen-dependent T-cell-mediated proliferation and costimulates T-cell activation (By similarity). Positively modulates FAS-dependent apoptosis in T-cells, perhaps by enhancing FAS clustering (By similarity). Plays a role in suppressing angiogenesis and may be involved in metabolic dysregulation during normal aging (By similarity). In response to THBS1, negatively modulates wound healing. Inhibits stem cell self-renewal, in response to THBS1, probably by regulation of the stem cell transcription factors POU5F1/OCT4, SOX2, MYC/c-Myc and KLF4 (By similarity). May play a role in membrane transport and/or integrin dependent signal transduction (By similarity). May prevent premature elimination of red blood cells (By similarity).</text>
</comment>
<comment type="subunit">
    <text evidence="2">Monomer. Interacts with THBS1 (via the C-terminal domain). Interacts with SIRPA. Interacts with FAS/CD95; interaction may be enhanced by functional activation. Interacts with SIRPG, UBQLN1 and UBQLN2. May interact with fibrinogen.</text>
</comment>
<comment type="subcellular location">
    <subcellularLocation>
        <location evidence="1">Cell membrane</location>
        <topology evidence="1">Multi-pass membrane protein</topology>
    </subcellularLocation>
</comment>
<comment type="alternative products">
    <event type="alternative splicing"/>
    <isoform>
        <id>P97829-1</id>
        <name>1</name>
        <sequence type="displayed"/>
    </isoform>
    <isoform>
        <id>P97829-2</id>
        <name>2</name>
        <sequence type="described" ref="VSP_015794 VSP_015795"/>
    </isoform>
</comment>
<comment type="tissue specificity">
    <text evidence="7">Expressed in hippocampus.</text>
</comment>
<comment type="induction">
    <text evidence="6 7">By ferric nitrilotriacetate, NMDA and amphetamine.</text>
</comment>
<dbReference type="EMBL" id="D87659">
    <property type="protein sequence ID" value="BAA13420.1"/>
    <property type="molecule type" value="mRNA"/>
</dbReference>
<dbReference type="EMBL" id="AF017437">
    <property type="protein sequence ID" value="AAB70273.1"/>
    <property type="molecule type" value="mRNA"/>
</dbReference>
<dbReference type="EMBL" id="BC085740">
    <property type="protein sequence ID" value="AAH85740.1"/>
    <property type="molecule type" value="mRNA"/>
</dbReference>
<dbReference type="RefSeq" id="NP_062068.1">
    <molecule id="P97829-1"/>
    <property type="nucleotide sequence ID" value="NM_019195.2"/>
</dbReference>
<dbReference type="SMR" id="P97829"/>
<dbReference type="BioGRID" id="248018">
    <property type="interactions" value="2"/>
</dbReference>
<dbReference type="FunCoup" id="P97829">
    <property type="interactions" value="1002"/>
</dbReference>
<dbReference type="IntAct" id="P97829">
    <property type="interactions" value="1"/>
</dbReference>
<dbReference type="MINT" id="P97829"/>
<dbReference type="STRING" id="10116.ENSRNOP00000068714"/>
<dbReference type="GuidetoPHARMACOLOGY" id="2943"/>
<dbReference type="GlyCosmos" id="P97829">
    <property type="glycosylation" value="6 sites, 23 glycans"/>
</dbReference>
<dbReference type="GlyGen" id="P97829">
    <property type="glycosylation" value="6 sites, 24 N-linked glycans (3 sites)"/>
</dbReference>
<dbReference type="iPTMnet" id="P97829"/>
<dbReference type="PhosphoSitePlus" id="P97829"/>
<dbReference type="SwissPalm" id="P97829"/>
<dbReference type="PaxDb" id="10116-ENSRNOP00000050938"/>
<dbReference type="GeneID" id="29364"/>
<dbReference type="KEGG" id="rno:29364"/>
<dbReference type="UCSC" id="RGD:2308">
    <molecule id="P97829-1"/>
    <property type="organism name" value="rat"/>
</dbReference>
<dbReference type="AGR" id="RGD:2308"/>
<dbReference type="CTD" id="961"/>
<dbReference type="RGD" id="2308">
    <property type="gene designation" value="Cd47"/>
</dbReference>
<dbReference type="VEuPathDB" id="HostDB:ENSRNOG00000001964"/>
<dbReference type="eggNOG" id="ENOG502RYTQ">
    <property type="taxonomic scope" value="Eukaryota"/>
</dbReference>
<dbReference type="InParanoid" id="P97829"/>
<dbReference type="Reactome" id="R-RNO-202733">
    <property type="pathway name" value="Cell surface interactions at the vascular wall"/>
</dbReference>
<dbReference type="Reactome" id="R-RNO-216083">
    <property type="pathway name" value="Integrin cell surface interactions"/>
</dbReference>
<dbReference type="Reactome" id="R-RNO-391160">
    <property type="pathway name" value="Signal regulatory protein family interactions"/>
</dbReference>
<dbReference type="Reactome" id="R-RNO-6798695">
    <property type="pathway name" value="Neutrophil degranulation"/>
</dbReference>
<dbReference type="PRO" id="PR:P97829"/>
<dbReference type="Proteomes" id="UP000002494">
    <property type="component" value="Chromosome 11"/>
</dbReference>
<dbReference type="Bgee" id="ENSRNOG00000001964">
    <property type="expression patterns" value="Expressed in pancreas and 19 other cell types or tissues"/>
</dbReference>
<dbReference type="ExpressionAtlas" id="P97829">
    <property type="expression patterns" value="baseline and differential"/>
</dbReference>
<dbReference type="GO" id="GO:0009986">
    <property type="term" value="C:cell surface"/>
    <property type="evidence" value="ECO:0000314"/>
    <property type="project" value="ARUK-UCL"/>
</dbReference>
<dbReference type="GO" id="GO:0070062">
    <property type="term" value="C:extracellular exosome"/>
    <property type="evidence" value="ECO:0000266"/>
    <property type="project" value="RGD"/>
</dbReference>
<dbReference type="GO" id="GO:0098978">
    <property type="term" value="C:glutamatergic synapse"/>
    <property type="evidence" value="ECO:0000266"/>
    <property type="project" value="RGD"/>
</dbReference>
<dbReference type="GO" id="GO:0005886">
    <property type="term" value="C:plasma membrane"/>
    <property type="evidence" value="ECO:0000266"/>
    <property type="project" value="RGD"/>
</dbReference>
<dbReference type="GO" id="GO:0098793">
    <property type="term" value="C:presynapse"/>
    <property type="evidence" value="ECO:0000266"/>
    <property type="project" value="RGD"/>
</dbReference>
<dbReference type="GO" id="GO:0098632">
    <property type="term" value="F:cell-cell adhesion mediator activity"/>
    <property type="evidence" value="ECO:0000266"/>
    <property type="project" value="RGD"/>
</dbReference>
<dbReference type="GO" id="GO:0070051">
    <property type="term" value="F:fibrinogen binding"/>
    <property type="evidence" value="ECO:0000266"/>
    <property type="project" value="RGD"/>
</dbReference>
<dbReference type="GO" id="GO:0086080">
    <property type="term" value="F:protein binding involved in heterotypic cell-cell adhesion"/>
    <property type="evidence" value="ECO:0000353"/>
    <property type="project" value="ARUK-UCL"/>
</dbReference>
<dbReference type="GO" id="GO:0070053">
    <property type="term" value="F:thrombospondin receptor activity"/>
    <property type="evidence" value="ECO:0000266"/>
    <property type="project" value="RGD"/>
</dbReference>
<dbReference type="GO" id="GO:1904669">
    <property type="term" value="P:ATP export"/>
    <property type="evidence" value="ECO:0000266"/>
    <property type="project" value="RGD"/>
</dbReference>
<dbReference type="GO" id="GO:0016477">
    <property type="term" value="P:cell migration"/>
    <property type="evidence" value="ECO:0000314"/>
    <property type="project" value="RGD"/>
</dbReference>
<dbReference type="GO" id="GO:0071347">
    <property type="term" value="P:cellular response to interleukin-1"/>
    <property type="evidence" value="ECO:0000315"/>
    <property type="project" value="ARUK-UCL"/>
</dbReference>
<dbReference type="GO" id="GO:0071349">
    <property type="term" value="P:cellular response to interleukin-12"/>
    <property type="evidence" value="ECO:0000266"/>
    <property type="project" value="RGD"/>
</dbReference>
<dbReference type="GO" id="GO:0071346">
    <property type="term" value="P:cellular response to type II interferon"/>
    <property type="evidence" value="ECO:0000315"/>
    <property type="project" value="ARUK-UCL"/>
</dbReference>
<dbReference type="GO" id="GO:0006954">
    <property type="term" value="P:inflammatory response"/>
    <property type="evidence" value="ECO:0000266"/>
    <property type="project" value="RGD"/>
</dbReference>
<dbReference type="GO" id="GO:0007229">
    <property type="term" value="P:integrin-mediated signaling pathway"/>
    <property type="evidence" value="ECO:0007669"/>
    <property type="project" value="UniProtKB-KW"/>
</dbReference>
<dbReference type="GO" id="GO:0070487">
    <property type="term" value="P:monocyte aggregation"/>
    <property type="evidence" value="ECO:0000266"/>
    <property type="project" value="RGD"/>
</dbReference>
<dbReference type="GO" id="GO:0050765">
    <property type="term" value="P:negative regulation of phagocytosis"/>
    <property type="evidence" value="ECO:0000315"/>
    <property type="project" value="ARUK-UCL"/>
</dbReference>
<dbReference type="GO" id="GO:0008228">
    <property type="term" value="P:opsonization"/>
    <property type="evidence" value="ECO:0000266"/>
    <property type="project" value="RGD"/>
</dbReference>
<dbReference type="GO" id="GO:0070237">
    <property type="term" value="P:positive regulation of activation-induced cell death of T cells"/>
    <property type="evidence" value="ECO:0000266"/>
    <property type="project" value="RGD"/>
</dbReference>
<dbReference type="GO" id="GO:0008284">
    <property type="term" value="P:positive regulation of cell population proliferation"/>
    <property type="evidence" value="ECO:0000266"/>
    <property type="project" value="RGD"/>
</dbReference>
<dbReference type="GO" id="GO:0022409">
    <property type="term" value="P:positive regulation of cell-cell adhesion"/>
    <property type="evidence" value="ECO:0000266"/>
    <property type="project" value="RGD"/>
</dbReference>
<dbReference type="GO" id="GO:0050729">
    <property type="term" value="P:positive regulation of inflammatory response"/>
    <property type="evidence" value="ECO:0000266"/>
    <property type="project" value="RGD"/>
</dbReference>
<dbReference type="GO" id="GO:2000439">
    <property type="term" value="P:positive regulation of monocyte extravasation"/>
    <property type="evidence" value="ECO:0000315"/>
    <property type="project" value="ARUK-UCL"/>
</dbReference>
<dbReference type="GO" id="GO:0050766">
    <property type="term" value="P:positive regulation of phagocytosis"/>
    <property type="evidence" value="ECO:0000315"/>
    <property type="project" value="RGD"/>
</dbReference>
<dbReference type="GO" id="GO:0051496">
    <property type="term" value="P:positive regulation of stress fiber assembly"/>
    <property type="evidence" value="ECO:0000315"/>
    <property type="project" value="ARUK-UCL"/>
</dbReference>
<dbReference type="GO" id="GO:0050870">
    <property type="term" value="P:positive regulation of T cell activation"/>
    <property type="evidence" value="ECO:0000266"/>
    <property type="project" value="RGD"/>
</dbReference>
<dbReference type="GO" id="GO:0060368">
    <property type="term" value="P:regulation of Fc receptor mediated stimulatory signaling pathway"/>
    <property type="evidence" value="ECO:0000315"/>
    <property type="project" value="ARUK-UCL"/>
</dbReference>
<dbReference type="GO" id="GO:0032653">
    <property type="term" value="P:regulation of interleukin-10 production"/>
    <property type="evidence" value="ECO:0000266"/>
    <property type="project" value="RGD"/>
</dbReference>
<dbReference type="GO" id="GO:0032655">
    <property type="term" value="P:regulation of interleukin-12 production"/>
    <property type="evidence" value="ECO:0000266"/>
    <property type="project" value="RGD"/>
</dbReference>
<dbReference type="GO" id="GO:0032675">
    <property type="term" value="P:regulation of interleukin-6 production"/>
    <property type="evidence" value="ECO:0000266"/>
    <property type="project" value="RGD"/>
</dbReference>
<dbReference type="GO" id="GO:0045428">
    <property type="term" value="P:regulation of nitric oxide biosynthetic process"/>
    <property type="evidence" value="ECO:0000266"/>
    <property type="project" value="RGD"/>
</dbReference>
<dbReference type="GO" id="GO:1905806">
    <property type="term" value="P:regulation of synapse pruning"/>
    <property type="evidence" value="ECO:0000266"/>
    <property type="project" value="RGD"/>
</dbReference>
<dbReference type="GO" id="GO:0032680">
    <property type="term" value="P:regulation of tumor necrosis factor production"/>
    <property type="evidence" value="ECO:0000266"/>
    <property type="project" value="RGD"/>
</dbReference>
<dbReference type="GO" id="GO:0032649">
    <property type="term" value="P:regulation of type II interferon production"/>
    <property type="evidence" value="ECO:0000266"/>
    <property type="project" value="RGD"/>
</dbReference>
<dbReference type="GO" id="GO:0009617">
    <property type="term" value="P:response to bacterium"/>
    <property type="evidence" value="ECO:0000266"/>
    <property type="project" value="RGD"/>
</dbReference>
<dbReference type="CDD" id="cd16090">
    <property type="entry name" value="IgV_CD47"/>
    <property type="match status" value="1"/>
</dbReference>
<dbReference type="FunFam" id="2.60.40.10:FF:000521">
    <property type="entry name" value="leukocyte surface antigen CD47"/>
    <property type="match status" value="1"/>
</dbReference>
<dbReference type="Gene3D" id="2.60.40.10">
    <property type="entry name" value="Immunoglobulins"/>
    <property type="match status" value="1"/>
</dbReference>
<dbReference type="InterPro" id="IPR006704">
    <property type="entry name" value="CD47"/>
</dbReference>
<dbReference type="InterPro" id="IPR013147">
    <property type="entry name" value="CD47-like_TM"/>
</dbReference>
<dbReference type="InterPro" id="IPR013270">
    <property type="entry name" value="CD47_Vset"/>
</dbReference>
<dbReference type="InterPro" id="IPR007110">
    <property type="entry name" value="Ig-like_dom"/>
</dbReference>
<dbReference type="InterPro" id="IPR013783">
    <property type="entry name" value="Ig-like_fold"/>
</dbReference>
<dbReference type="InterPro" id="IPR037805">
    <property type="entry name" value="IgV_CD47"/>
</dbReference>
<dbReference type="PANTHER" id="PTHR10613">
    <property type="entry name" value="LEUKOCYTE SURFACE ANTIGEN CD47"/>
    <property type="match status" value="1"/>
</dbReference>
<dbReference type="PANTHER" id="PTHR10613:SF0">
    <property type="entry name" value="LEUKOCYTE SURFACE ANTIGEN CD47"/>
    <property type="match status" value="1"/>
</dbReference>
<dbReference type="Pfam" id="PF04549">
    <property type="entry name" value="CD47"/>
    <property type="match status" value="1"/>
</dbReference>
<dbReference type="Pfam" id="PF08204">
    <property type="entry name" value="V-set_CD47"/>
    <property type="match status" value="1"/>
</dbReference>
<dbReference type="PROSITE" id="PS50835">
    <property type="entry name" value="IG_LIKE"/>
    <property type="match status" value="1"/>
</dbReference>
<gene>
    <name type="primary">Cd47</name>
</gene>
<name>CD47_RAT</name>
<protein>
    <recommendedName>
        <fullName>Leukocyte surface antigen CD47</fullName>
    </recommendedName>
    <alternativeName>
        <fullName>Integrin-associated protein</fullName>
        <shortName>IAP</shortName>
    </alternativeName>
    <cdAntigenName>CD47</cdAntigenName>
</protein>
<sequence>MWPLAAALLLGSCCCGSAQLLLSKVKSVEFTSCNDTVVIPCKVLNVEAQSTDEMFVKWKLNKSYIFIYDGNKNSTTREQNFTSAKISVSDLLKGIASLTMDTHEAVVGNYTCEVTELSREGKTVIELKNRPVSWFSTNEKILIVIFPILAILLFWGKFGILTLKYKSSHTNKRIILLLVAGLALTLIVVVGAILFIPGEKPVKNASGLGLIVISTGILILLQYNVFMTAFGMTSFTIAILITQVLGYVLAVVGMCLCIMACEPVHGPLLISGLGIIALAELLGLVYMKFVASNQRTIQPPRNN</sequence>
<evidence type="ECO:0000250" key="1"/>
<evidence type="ECO:0000250" key="2">
    <source>
        <dbReference type="UniProtKB" id="Q08722"/>
    </source>
</evidence>
<evidence type="ECO:0000250" key="3">
    <source>
        <dbReference type="UniProtKB" id="Q61735"/>
    </source>
</evidence>
<evidence type="ECO:0000255" key="4"/>
<evidence type="ECO:0000255" key="5">
    <source>
        <dbReference type="PROSITE-ProRule" id="PRU00114"/>
    </source>
</evidence>
<evidence type="ECO:0000269" key="6">
    <source>
    </source>
</evidence>
<evidence type="ECO:0000269" key="7">
    <source>
    </source>
</evidence>
<evidence type="ECO:0000303" key="8">
    <source>
    </source>
</evidence>
<evidence type="ECO:0000305" key="9"/>
<evidence type="ECO:0007744" key="10">
    <source>
    </source>
</evidence>
<evidence type="ECO:0007744" key="11">
    <source>
    </source>
</evidence>